<accession>Q8RX83</accession>
<accession>O80890</accession>
<name>CSLB3_ARATH</name>
<feature type="chain" id="PRO_0000319337" description="Cellulose synthase-like protein B3">
    <location>
        <begin position="1"/>
        <end position="755"/>
    </location>
</feature>
<feature type="transmembrane region" description="Helical" evidence="1">
    <location>
        <begin position="24"/>
        <end position="44"/>
    </location>
</feature>
<feature type="transmembrane region" description="Helical" evidence="1">
    <location>
        <begin position="51"/>
        <end position="71"/>
    </location>
</feature>
<feature type="transmembrane region" description="Helical" evidence="1">
    <location>
        <begin position="534"/>
        <end position="556"/>
    </location>
</feature>
<feature type="transmembrane region" description="Helical" evidence="1">
    <location>
        <begin position="569"/>
        <end position="589"/>
    </location>
</feature>
<feature type="transmembrane region" description="Helical" evidence="1">
    <location>
        <begin position="615"/>
        <end position="635"/>
    </location>
</feature>
<feature type="transmembrane region" description="Helical" evidence="1">
    <location>
        <begin position="674"/>
        <end position="694"/>
    </location>
</feature>
<feature type="transmembrane region" description="Helical" evidence="1">
    <location>
        <begin position="702"/>
        <end position="722"/>
    </location>
</feature>
<feature type="transmembrane region" description="Helical" evidence="1">
    <location>
        <begin position="733"/>
        <end position="753"/>
    </location>
</feature>
<feature type="active site" evidence="1">
    <location>
        <position position="136"/>
    </location>
</feature>
<feature type="active site" evidence="1">
    <location>
        <position position="461"/>
    </location>
</feature>
<reference key="1">
    <citation type="journal article" date="1999" name="Nature">
        <title>Sequence and analysis of chromosome 2 of the plant Arabidopsis thaliana.</title>
        <authorList>
            <person name="Lin X."/>
            <person name="Kaul S."/>
            <person name="Rounsley S.D."/>
            <person name="Shea T.P."/>
            <person name="Benito M.-I."/>
            <person name="Town C.D."/>
            <person name="Fujii C.Y."/>
            <person name="Mason T.M."/>
            <person name="Bowman C.L."/>
            <person name="Barnstead M.E."/>
            <person name="Feldblyum T.V."/>
            <person name="Buell C.R."/>
            <person name="Ketchum K.A."/>
            <person name="Lee J.J."/>
            <person name="Ronning C.M."/>
            <person name="Koo H.L."/>
            <person name="Moffat K.S."/>
            <person name="Cronin L.A."/>
            <person name="Shen M."/>
            <person name="Pai G."/>
            <person name="Van Aken S."/>
            <person name="Umayam L."/>
            <person name="Tallon L.J."/>
            <person name="Gill J.E."/>
            <person name="Adams M.D."/>
            <person name="Carrera A.J."/>
            <person name="Creasy T.H."/>
            <person name="Goodman H.M."/>
            <person name="Somerville C.R."/>
            <person name="Copenhaver G.P."/>
            <person name="Preuss D."/>
            <person name="Nierman W.C."/>
            <person name="White O."/>
            <person name="Eisen J.A."/>
            <person name="Salzberg S.L."/>
            <person name="Fraser C.M."/>
            <person name="Venter J.C."/>
        </authorList>
    </citation>
    <scope>NUCLEOTIDE SEQUENCE [LARGE SCALE GENOMIC DNA]</scope>
    <source>
        <strain>cv. Columbia</strain>
    </source>
</reference>
<reference key="2">
    <citation type="journal article" date="2017" name="Plant J.">
        <title>Araport11: a complete reannotation of the Arabidopsis thaliana reference genome.</title>
        <authorList>
            <person name="Cheng C.Y."/>
            <person name="Krishnakumar V."/>
            <person name="Chan A.P."/>
            <person name="Thibaud-Nissen F."/>
            <person name="Schobel S."/>
            <person name="Town C.D."/>
        </authorList>
    </citation>
    <scope>GENOME REANNOTATION</scope>
    <source>
        <strain>cv. Columbia</strain>
    </source>
</reference>
<reference key="3">
    <citation type="journal article" date="2003" name="Science">
        <title>Empirical analysis of transcriptional activity in the Arabidopsis genome.</title>
        <authorList>
            <person name="Yamada K."/>
            <person name="Lim J."/>
            <person name="Dale J.M."/>
            <person name="Chen H."/>
            <person name="Shinn P."/>
            <person name="Palm C.J."/>
            <person name="Southwick A.M."/>
            <person name="Wu H.C."/>
            <person name="Kim C.J."/>
            <person name="Nguyen M."/>
            <person name="Pham P.K."/>
            <person name="Cheuk R.F."/>
            <person name="Karlin-Newmann G."/>
            <person name="Liu S.X."/>
            <person name="Lam B."/>
            <person name="Sakano H."/>
            <person name="Wu T."/>
            <person name="Yu G."/>
            <person name="Miranda M."/>
            <person name="Quach H.L."/>
            <person name="Tripp M."/>
            <person name="Chang C.H."/>
            <person name="Lee J.M."/>
            <person name="Toriumi M.J."/>
            <person name="Chan M.M."/>
            <person name="Tang C.C."/>
            <person name="Onodera C.S."/>
            <person name="Deng J.M."/>
            <person name="Akiyama K."/>
            <person name="Ansari Y."/>
            <person name="Arakawa T."/>
            <person name="Banh J."/>
            <person name="Banno F."/>
            <person name="Bowser L."/>
            <person name="Brooks S.Y."/>
            <person name="Carninci P."/>
            <person name="Chao Q."/>
            <person name="Choy N."/>
            <person name="Enju A."/>
            <person name="Goldsmith A.D."/>
            <person name="Gurjal M."/>
            <person name="Hansen N.F."/>
            <person name="Hayashizaki Y."/>
            <person name="Johnson-Hopson C."/>
            <person name="Hsuan V.W."/>
            <person name="Iida K."/>
            <person name="Karnes M."/>
            <person name="Khan S."/>
            <person name="Koesema E."/>
            <person name="Ishida J."/>
            <person name="Jiang P.X."/>
            <person name="Jones T."/>
            <person name="Kawai J."/>
            <person name="Kamiya A."/>
            <person name="Meyers C."/>
            <person name="Nakajima M."/>
            <person name="Narusaka M."/>
            <person name="Seki M."/>
            <person name="Sakurai T."/>
            <person name="Satou M."/>
            <person name="Tamse R."/>
            <person name="Vaysberg M."/>
            <person name="Wallender E.K."/>
            <person name="Wong C."/>
            <person name="Yamamura Y."/>
            <person name="Yuan S."/>
            <person name="Shinozaki K."/>
            <person name="Davis R.W."/>
            <person name="Theologis A."/>
            <person name="Ecker J.R."/>
        </authorList>
    </citation>
    <scope>NUCLEOTIDE SEQUENCE [LARGE SCALE MRNA]</scope>
    <source>
        <strain>cv. Columbia</strain>
    </source>
</reference>
<reference key="4">
    <citation type="journal article" date="2000" name="Plant Physiol.">
        <title>The cellulose synthase superfamily.</title>
        <authorList>
            <person name="Richmond T.A."/>
            <person name="Somerville C.R."/>
        </authorList>
    </citation>
    <scope>GENE FAMILY</scope>
    <scope>NOMENCLATURE</scope>
</reference>
<reference key="5">
    <citation type="journal article" date="2001" name="Plant Mol. Biol.">
        <title>Integrative approaches to determining Csl function.</title>
        <authorList>
            <person name="Richmond T.A."/>
            <person name="Somerville C.R."/>
        </authorList>
    </citation>
    <scope>TISSUE SPECIFICITY</scope>
</reference>
<evidence type="ECO:0000255" key="1"/>
<evidence type="ECO:0000269" key="2">
    <source>
    </source>
</evidence>
<evidence type="ECO:0000305" key="3"/>
<organism>
    <name type="scientific">Arabidopsis thaliana</name>
    <name type="common">Mouse-ear cress</name>
    <dbReference type="NCBI Taxonomy" id="3702"/>
    <lineage>
        <taxon>Eukaryota</taxon>
        <taxon>Viridiplantae</taxon>
        <taxon>Streptophyta</taxon>
        <taxon>Embryophyta</taxon>
        <taxon>Tracheophyta</taxon>
        <taxon>Spermatophyta</taxon>
        <taxon>Magnoliopsida</taxon>
        <taxon>eudicotyledons</taxon>
        <taxon>Gunneridae</taxon>
        <taxon>Pentapetalae</taxon>
        <taxon>rosids</taxon>
        <taxon>malvids</taxon>
        <taxon>Brassicales</taxon>
        <taxon>Brassicaceae</taxon>
        <taxon>Camelineae</taxon>
        <taxon>Arabidopsis</taxon>
    </lineage>
</organism>
<proteinExistence type="evidence at transcript level"/>
<comment type="function">
    <text>Thought to be a Golgi-localized beta-glycan synthase that polymerize the backbones of noncellulosic polysaccharides (hemicelluloses) of plant cell wall.</text>
</comment>
<comment type="subcellular location">
    <subcellularLocation>
        <location evidence="3">Golgi apparatus membrane</location>
        <topology evidence="3">Multi-pass membrane protein</topology>
    </subcellularLocation>
</comment>
<comment type="tissue specificity">
    <text evidence="2">Expressed in young seedlings, primarily in the vascular tissue.</text>
</comment>
<comment type="similarity">
    <text evidence="3">Belongs to the glycosyltransferase 2 family. Plant cellulose synthase-like B subfamily.</text>
</comment>
<comment type="sequence caution" evidence="3">
    <conflict type="erroneous initiation">
        <sequence resource="EMBL-CDS" id="AAC25935"/>
    </conflict>
</comment>
<gene>
    <name type="primary">CSLB3</name>
    <name type="ordered locus">At2g32530</name>
    <name type="ORF">T26B15.9</name>
</gene>
<keyword id="KW-0961">Cell wall biogenesis/degradation</keyword>
<keyword id="KW-0328">Glycosyltransferase</keyword>
<keyword id="KW-0333">Golgi apparatus</keyword>
<keyword id="KW-0472">Membrane</keyword>
<keyword id="KW-1185">Reference proteome</keyword>
<keyword id="KW-0808">Transferase</keyword>
<keyword id="KW-0812">Transmembrane</keyword>
<keyword id="KW-1133">Transmembrane helix</keyword>
<protein>
    <recommendedName>
        <fullName>Cellulose synthase-like protein B3</fullName>
        <shortName>AtCslB3</shortName>
        <ecNumber>2.4.1.-</ecNumber>
    </recommendedName>
</protein>
<dbReference type="EC" id="2.4.1.-"/>
<dbReference type="EMBL" id="AC004681">
    <property type="protein sequence ID" value="AAC25935.1"/>
    <property type="status" value="ALT_INIT"/>
    <property type="molecule type" value="Genomic_DNA"/>
</dbReference>
<dbReference type="EMBL" id="CP002685">
    <property type="protein sequence ID" value="AEC08697.1"/>
    <property type="molecule type" value="Genomic_DNA"/>
</dbReference>
<dbReference type="EMBL" id="AY090243">
    <property type="protein sequence ID" value="AAL90907.1"/>
    <property type="molecule type" value="mRNA"/>
</dbReference>
<dbReference type="EMBL" id="BT002290">
    <property type="protein sequence ID" value="AAN72301.1"/>
    <property type="molecule type" value="mRNA"/>
</dbReference>
<dbReference type="PIR" id="T02552">
    <property type="entry name" value="T02552"/>
</dbReference>
<dbReference type="SMR" id="Q8RX83"/>
<dbReference type="FunCoup" id="Q8RX83">
    <property type="interactions" value="6"/>
</dbReference>
<dbReference type="STRING" id="3702.Q8RX83"/>
<dbReference type="CAZy" id="GT2">
    <property type="family name" value="Glycosyltransferase Family 2"/>
</dbReference>
<dbReference type="iPTMnet" id="Q8RX83"/>
<dbReference type="PaxDb" id="3702-AT2G32530.1"/>
<dbReference type="ProteomicsDB" id="220502"/>
<dbReference type="EnsemblPlants" id="AT2G32530.1">
    <property type="protein sequence ID" value="AT2G32530.1"/>
    <property type="gene ID" value="AT2G32530"/>
</dbReference>
<dbReference type="GeneID" id="817814"/>
<dbReference type="Gramene" id="AT2G32530.1">
    <property type="protein sequence ID" value="AT2G32530.1"/>
    <property type="gene ID" value="AT2G32530"/>
</dbReference>
<dbReference type="KEGG" id="ath:AT2G32530"/>
<dbReference type="Araport" id="AT2G32530"/>
<dbReference type="TAIR" id="AT2G32530">
    <property type="gene designation" value="CSLB03"/>
</dbReference>
<dbReference type="eggNOG" id="ENOG502QTT0">
    <property type="taxonomic scope" value="Eukaryota"/>
</dbReference>
<dbReference type="HOGENOM" id="CLU_001418_3_3_1"/>
<dbReference type="InParanoid" id="Q8RX83"/>
<dbReference type="OMA" id="FCSAYVV"/>
<dbReference type="PhylomeDB" id="Q8RX83"/>
<dbReference type="BioCyc" id="ARA:AT2G32530-MONOMER"/>
<dbReference type="PRO" id="PR:Q8RX83"/>
<dbReference type="Proteomes" id="UP000006548">
    <property type="component" value="Chromosome 2"/>
</dbReference>
<dbReference type="ExpressionAtlas" id="Q8RX83">
    <property type="expression patterns" value="baseline and differential"/>
</dbReference>
<dbReference type="GO" id="GO:0005783">
    <property type="term" value="C:endoplasmic reticulum"/>
    <property type="evidence" value="ECO:0007005"/>
    <property type="project" value="TAIR"/>
</dbReference>
<dbReference type="GO" id="GO:0000139">
    <property type="term" value="C:Golgi membrane"/>
    <property type="evidence" value="ECO:0007669"/>
    <property type="project" value="UniProtKB-SubCell"/>
</dbReference>
<dbReference type="GO" id="GO:0016760">
    <property type="term" value="F:cellulose synthase (UDP-forming) activity"/>
    <property type="evidence" value="ECO:0007669"/>
    <property type="project" value="InterPro"/>
</dbReference>
<dbReference type="GO" id="GO:0071555">
    <property type="term" value="P:cell wall organization"/>
    <property type="evidence" value="ECO:0007669"/>
    <property type="project" value="UniProtKB-KW"/>
</dbReference>
<dbReference type="GO" id="GO:0030244">
    <property type="term" value="P:cellulose biosynthetic process"/>
    <property type="evidence" value="ECO:0007669"/>
    <property type="project" value="InterPro"/>
</dbReference>
<dbReference type="FunFam" id="3.90.550.10:FF:000162">
    <property type="entry name" value="Cellulose synthase-like B6"/>
    <property type="match status" value="1"/>
</dbReference>
<dbReference type="Gene3D" id="3.90.550.10">
    <property type="entry name" value="Spore Coat Polysaccharide Biosynthesis Protein SpsA, Chain A"/>
    <property type="match status" value="1"/>
</dbReference>
<dbReference type="InterPro" id="IPR005150">
    <property type="entry name" value="Cellulose_synth"/>
</dbReference>
<dbReference type="InterPro" id="IPR029044">
    <property type="entry name" value="Nucleotide-diphossugar_trans"/>
</dbReference>
<dbReference type="PANTHER" id="PTHR13301">
    <property type="entry name" value="X-BOX TRANSCRIPTION FACTOR-RELATED"/>
    <property type="match status" value="1"/>
</dbReference>
<dbReference type="Pfam" id="PF03552">
    <property type="entry name" value="Cellulose_synt"/>
    <property type="match status" value="2"/>
</dbReference>
<dbReference type="SUPFAM" id="SSF53448">
    <property type="entry name" value="Nucleotide-diphospho-sugar transferases"/>
    <property type="match status" value="1"/>
</dbReference>
<sequence>MADSSSSLPPLCEKISYKNYFLRVVDLTILGFLFSLLLYRILLMNQNNSVWVVAFLCESFFSFIWLLITSIKWSPASYKSYPERLDERVHDLPSVDMFVTTADPVREPPILVANTLLSLLAVNYPANKLACYVSDDGCSPLTYFSLKEASKFAKIWVPFCKKYNIKVRAPFRYFLNPPAATESSEFSKDWEITKREYEKLSRRVEDATGDSHWLDAEDDFEDFSNTKPNDHSTIVKVVWENKGGVGVENEVPHFVYISREKRPNYLHHYKAGAMNFLVRVSGLMTNAPYMLNVDCDMYANEADVVRQAMCIFLQKSMNSNHCAFVQFPQEFYDSNADELTVLQSYLGRGIAGIQGPTYAGSGCFHTRRVMYGLSIDDLEDDGSLSSLATRKYLAEENLAREFGNSNEMVTSVVEALQRKPNPQNTLANSLEAAQEVGHCHFEYQTSWGKTIGWLYESTAEDANTSIGIHSRGWTSSYISPKPPAFLGAMPPGGPEAMLQQRRWATGLLEVLFNKQSPLIGMFCRKIRFRQSLAYLYIFTWGLRSIPELIYCLLPAYCLLHNAALFPKGVYLGIVVTLVGMHCLYSLWEFMSLGFSVQSWFASQSFWRIKTTCSWLFSIPDIILKLLGISKTVFIVTKKTMPKTMSGSGSEKSQREVDCPNQDSGKFEFDGSLYFLPGTFILLVNLAALAGCSVGLQRHRGGGSGLAEACGCILVVILFLPFLKGMFEKGKYGIPWSTLSKAAFLAVLFVVFSVGN</sequence>